<keyword id="KW-1003">Cell membrane</keyword>
<keyword id="KW-1015">Disulfide bond</keyword>
<keyword id="KW-0297">G-protein coupled receptor</keyword>
<keyword id="KW-0325">Glycoprotein</keyword>
<keyword id="KW-0472">Membrane</keyword>
<keyword id="KW-0675">Receptor</keyword>
<keyword id="KW-1185">Reference proteome</keyword>
<keyword id="KW-0807">Transducer</keyword>
<keyword id="KW-0812">Transmembrane</keyword>
<keyword id="KW-1133">Transmembrane helix</keyword>
<evidence type="ECO:0000250" key="1">
    <source>
        <dbReference type="UniProtKB" id="P46093"/>
    </source>
</evidence>
<evidence type="ECO:0000250" key="2">
    <source>
        <dbReference type="UniProtKB" id="Q8BUD0"/>
    </source>
</evidence>
<evidence type="ECO:0000255" key="3"/>
<evidence type="ECO:0000255" key="4">
    <source>
        <dbReference type="PROSITE-ProRule" id="PRU00521"/>
    </source>
</evidence>
<evidence type="ECO:0000305" key="5"/>
<sequence length="362" mass="41076">MGNRTLEGCHVDSRMDHLFPPSLYIFVIGVGLPTNCLALWAAYRQVRQRNELGVYLMNLSIADLLYICTLPLWVDYFLHHDNWIHGPGSCKLFGFIFYTNIYISIAFLCCISVDRYLAVAHPLRFARLRRVKTAVAVSSVVWATELGANSAPLFHDELFRDRYNHTFCFEKFPMEGWVAWMNLYRVFVGFLFPWALMLLSYRGILRAVRGSVSTERQEKVKIKRLALSLIAIVLVCFAPYHVLLLSRSAVYLRRPRDCGFEERVFSAYHSSLAFTSLNCVADPILYCLVNEGARSDVAKALHHLLRFLASDKPQEMANASLTLETPLTSKRNSMAKAMAAGWVAAPLAQGDQVQLKMLPPAQ</sequence>
<accession>Q1JQB3</accession>
<reference key="1">
    <citation type="submission" date="2006-05" db="EMBL/GenBank/DDBJ databases">
        <authorList>
            <consortium name="NIH - Mammalian Gene Collection (MGC) project"/>
        </authorList>
    </citation>
    <scope>NUCLEOTIDE SEQUENCE [LARGE SCALE MRNA]</scope>
    <source>
        <strain>Hereford</strain>
        <tissue>Ascending colon</tissue>
    </source>
</reference>
<organism>
    <name type="scientific">Bos taurus</name>
    <name type="common">Bovine</name>
    <dbReference type="NCBI Taxonomy" id="9913"/>
    <lineage>
        <taxon>Eukaryota</taxon>
        <taxon>Metazoa</taxon>
        <taxon>Chordata</taxon>
        <taxon>Craniata</taxon>
        <taxon>Vertebrata</taxon>
        <taxon>Euteleostomi</taxon>
        <taxon>Mammalia</taxon>
        <taxon>Eutheria</taxon>
        <taxon>Laurasiatheria</taxon>
        <taxon>Artiodactyla</taxon>
        <taxon>Ruminantia</taxon>
        <taxon>Pecora</taxon>
        <taxon>Bovidae</taxon>
        <taxon>Bovinae</taxon>
        <taxon>Bos</taxon>
    </lineage>
</organism>
<proteinExistence type="evidence at transcript level"/>
<comment type="function">
    <text evidence="1 2">Proton-sensing G-protein coupled receptor activated by extracellular pH, which is required to monitor pH changes and generate adaptive reactions. Activated by an optimal pH of 6.8-7.2. Ligand binding causes a conformation change that triggers signaling via guanine nucleotide-binding proteins (G proteins) and modulates the activity of downstream effectors, such as adenylate cyclase. GPR4 is mainly coupled to G(s) G proteins and mediates activation of adenylate cyclase activity. May also couple with G(q) and G(12)/G(13) G proteins (By similarity). Acts as a key regulator of respiratory sensitivity to CO2/H(+) in brain retrotrapezoid nucleus neurons: acts by mediating detection of protons generated by the formation of carbonic acid in the blood, an important mechanism to impulse to breathe (By similarity). Also acts as a regulator of acid secretion in the kidney collecting duct by maintaining acid-base homeostasis in the kidney. Acidosis-induced GPR4 activation increases paracellular gap formation and permeability of vascular endothelial cells, possibly through the G(12)/G(13)/Rho GTPase signaling pathway (By similarity).</text>
</comment>
<comment type="activity regulation">
    <text evidence="1">Activated by a network of residues that connects an extracellular-facing cavity to Glu-145, a conserved charged residue buried in the transmembrane core of the receptor. Protonation likely drives conformational changes in extracellular loop 2 (ECL2), which stabilizes movement of transmembrane 3 (TM3) and a series of rearrangements that connect the extracellular-facing cavity to Glu-145, a residue only conserved in proton-sensing G-protein coupled receptors.</text>
</comment>
<comment type="subcellular location">
    <subcellularLocation>
        <location evidence="1">Cell membrane</location>
        <topology evidence="3">Multi-pass membrane protein</topology>
    </subcellularLocation>
</comment>
<comment type="domain">
    <text evidence="1">A multitude of proton-sensing residues, which include extracellular histidine residues (His-155, His-165 and His-269) or triad of buried acidic residues (Asp-63, Glu-145 and Asp-282), contribute to activation of the G-protein coupled receptor activity and pH sensitivity.</text>
</comment>
<comment type="similarity">
    <text evidence="4">Belongs to the G-protein coupled receptor 1 family.</text>
</comment>
<feature type="chain" id="PRO_0000379518" description="G-protein coupled receptor 4">
    <location>
        <begin position="1"/>
        <end position="362"/>
    </location>
</feature>
<feature type="topological domain" description="Extracellular" evidence="1">
    <location>
        <begin position="1"/>
        <end position="8"/>
    </location>
</feature>
<feature type="transmembrane region" description="Helical; Name=1" evidence="1">
    <location>
        <begin position="9"/>
        <end position="45"/>
    </location>
</feature>
<feature type="topological domain" description="Cytoplasmic" evidence="1">
    <location>
        <begin position="46"/>
        <end position="49"/>
    </location>
</feature>
<feature type="transmembrane region" description="Helical; Name=2" evidence="1">
    <location>
        <begin position="50"/>
        <end position="80"/>
    </location>
</feature>
<feature type="topological domain" description="Extracellular" evidence="1">
    <location>
        <begin position="81"/>
        <end position="85"/>
    </location>
</feature>
<feature type="transmembrane region" description="Helical; Name=3" evidence="1">
    <location>
        <begin position="86"/>
        <end position="121"/>
    </location>
</feature>
<feature type="topological domain" description="Cytoplasmic" evidence="1">
    <location>
        <begin position="122"/>
        <end position="129"/>
    </location>
</feature>
<feature type="transmembrane region" description="Helical; Name=4" evidence="1">
    <location>
        <begin position="130"/>
        <end position="156"/>
    </location>
</feature>
<feature type="topological domain" description="Extracellular" evidence="1">
    <location>
        <begin position="157"/>
        <end position="172"/>
    </location>
</feature>
<feature type="transmembrane region" description="Helical; Name=5" evidence="1">
    <location>
        <begin position="173"/>
        <end position="210"/>
    </location>
</feature>
<feature type="topological domain" description="Cytoplasmic" evidence="1">
    <location>
        <begin position="211"/>
        <end position="214"/>
    </location>
</feature>
<feature type="transmembrane region" description="Helical; Name=6" evidence="1">
    <location>
        <begin position="215"/>
        <end position="250"/>
    </location>
</feature>
<feature type="topological domain" description="Extracellular" evidence="1">
    <location>
        <begin position="251"/>
        <end position="260"/>
    </location>
</feature>
<feature type="transmembrane region" description="Helical; Name=7" evidence="1">
    <location>
        <begin position="261"/>
        <end position="289"/>
    </location>
</feature>
<feature type="topological domain" description="Cytoplasmic" evidence="1">
    <location>
        <begin position="290"/>
        <end position="362"/>
    </location>
</feature>
<feature type="region of interest" description="Extracellular loop 2 (ECL2)" evidence="1">
    <location>
        <begin position="157"/>
        <end position="172"/>
    </location>
</feature>
<feature type="site" description="Required for activation" evidence="1">
    <location>
        <position position="145"/>
    </location>
</feature>
<feature type="site" description="Proton sensing" evidence="1">
    <location>
        <position position="155"/>
    </location>
</feature>
<feature type="site" description="Proton sensing" evidence="1">
    <location>
        <position position="165"/>
    </location>
</feature>
<feature type="site" description="Proton sensing" evidence="1">
    <location>
        <position position="269"/>
    </location>
</feature>
<feature type="glycosylation site" description="N-linked (GlcNAc...) asparagine" evidence="3">
    <location>
        <position position="3"/>
    </location>
</feature>
<feature type="glycosylation site" description="N-linked (GlcNAc...) asparagine" evidence="3">
    <location>
        <position position="164"/>
    </location>
</feature>
<feature type="disulfide bond" evidence="1">
    <location>
        <begin position="9"/>
        <end position="258"/>
    </location>
</feature>
<feature type="disulfide bond" evidence="4">
    <location>
        <begin position="90"/>
        <end position="168"/>
    </location>
</feature>
<gene>
    <name type="primary">GPR4</name>
</gene>
<name>GPR4_BOVIN</name>
<dbReference type="EMBL" id="BC116089">
    <property type="protein sequence ID" value="AAI16090.1"/>
    <property type="molecule type" value="mRNA"/>
</dbReference>
<dbReference type="RefSeq" id="NP_001069051.1">
    <property type="nucleotide sequence ID" value="NM_001075583.1"/>
</dbReference>
<dbReference type="RefSeq" id="XP_005219298.1">
    <property type="nucleotide sequence ID" value="XM_005219241.3"/>
</dbReference>
<dbReference type="RefSeq" id="XP_024833924.1">
    <property type="nucleotide sequence ID" value="XM_024978156.2"/>
</dbReference>
<dbReference type="RefSeq" id="XP_024833925.1">
    <property type="nucleotide sequence ID" value="XM_024978157.2"/>
</dbReference>
<dbReference type="RefSeq" id="XP_059732639.1">
    <property type="nucleotide sequence ID" value="XM_059876656.1"/>
</dbReference>
<dbReference type="SMR" id="Q1JQB3"/>
<dbReference type="FunCoup" id="Q1JQB3">
    <property type="interactions" value="191"/>
</dbReference>
<dbReference type="STRING" id="9913.ENSBTAP00000024480"/>
<dbReference type="GlyCosmos" id="Q1JQB3">
    <property type="glycosylation" value="2 sites, No reported glycans"/>
</dbReference>
<dbReference type="GlyGen" id="Q1JQB3">
    <property type="glycosylation" value="2 sites"/>
</dbReference>
<dbReference type="PaxDb" id="9913-ENSBTAP00000024480"/>
<dbReference type="Ensembl" id="ENSBTAT00000024480.7">
    <property type="protein sequence ID" value="ENSBTAP00000024480.5"/>
    <property type="gene ID" value="ENSBTAG00000018398.7"/>
</dbReference>
<dbReference type="Ensembl" id="ENSBTAT00000101647.1">
    <property type="protein sequence ID" value="ENSBTAP00000086040.1"/>
    <property type="gene ID" value="ENSBTAG00000018398.7"/>
</dbReference>
<dbReference type="Ensembl" id="ENSBTAT00000104347.1">
    <property type="protein sequence ID" value="ENSBTAP00000075024.1"/>
    <property type="gene ID" value="ENSBTAG00000018398.7"/>
</dbReference>
<dbReference type="Ensembl" id="ENSBTAT00000106077.1">
    <property type="protein sequence ID" value="ENSBTAP00000094444.1"/>
    <property type="gene ID" value="ENSBTAG00000018398.7"/>
</dbReference>
<dbReference type="Ensembl" id="ENSBTAT00000123316.1">
    <property type="protein sequence ID" value="ENSBTAP00000091640.1"/>
    <property type="gene ID" value="ENSBTAG00000018398.7"/>
</dbReference>
<dbReference type="Ensembl" id="ENSBTAT00000134689.1">
    <property type="protein sequence ID" value="ENSBTAP00000088510.1"/>
    <property type="gene ID" value="ENSBTAG00000018398.7"/>
</dbReference>
<dbReference type="GeneID" id="512876"/>
<dbReference type="KEGG" id="bta:512876"/>
<dbReference type="CTD" id="2828"/>
<dbReference type="VEuPathDB" id="HostDB:ENSBTAG00000018398"/>
<dbReference type="VGNC" id="VGNC:29587">
    <property type="gene designation" value="GPR4"/>
</dbReference>
<dbReference type="eggNOG" id="ENOG502QS9G">
    <property type="taxonomic scope" value="Eukaryota"/>
</dbReference>
<dbReference type="GeneTree" id="ENSGT01130000278337"/>
<dbReference type="HOGENOM" id="CLU_009579_8_2_1"/>
<dbReference type="InParanoid" id="Q1JQB3"/>
<dbReference type="OMA" id="RTWEGCH"/>
<dbReference type="OrthoDB" id="8742459at2759"/>
<dbReference type="TreeFam" id="TF331803"/>
<dbReference type="Reactome" id="R-BTA-373076">
    <property type="pathway name" value="Class A/1 (Rhodopsin-like receptors)"/>
</dbReference>
<dbReference type="Reactome" id="R-BTA-416476">
    <property type="pathway name" value="G alpha (q) signalling events"/>
</dbReference>
<dbReference type="Proteomes" id="UP000009136">
    <property type="component" value="Chromosome 18"/>
</dbReference>
<dbReference type="Bgee" id="ENSBTAG00000018398">
    <property type="expression patterns" value="Expressed in laryngeal cartilage and 98 other cell types or tissues"/>
</dbReference>
<dbReference type="GO" id="GO:0005886">
    <property type="term" value="C:plasma membrane"/>
    <property type="evidence" value="ECO:0000250"/>
    <property type="project" value="UniProtKB"/>
</dbReference>
<dbReference type="GO" id="GO:0004930">
    <property type="term" value="F:G protein-coupled receptor activity"/>
    <property type="evidence" value="ECO:0000250"/>
    <property type="project" value="UniProtKB"/>
</dbReference>
<dbReference type="GO" id="GO:0007189">
    <property type="term" value="P:adenylate cyclase-activating G protein-coupled receptor signaling pathway"/>
    <property type="evidence" value="ECO:0000250"/>
    <property type="project" value="UniProtKB"/>
</dbReference>
<dbReference type="GO" id="GO:0060055">
    <property type="term" value="P:angiogenesis involved in wound healing"/>
    <property type="evidence" value="ECO:0007669"/>
    <property type="project" value="Ensembl"/>
</dbReference>
<dbReference type="GO" id="GO:0072144">
    <property type="term" value="P:glomerular mesangial cell development"/>
    <property type="evidence" value="ECO:0007669"/>
    <property type="project" value="Ensembl"/>
</dbReference>
<dbReference type="GO" id="GO:0016525">
    <property type="term" value="P:negative regulation of angiogenesis"/>
    <property type="evidence" value="ECO:0007669"/>
    <property type="project" value="Ensembl"/>
</dbReference>
<dbReference type="GO" id="GO:0007200">
    <property type="term" value="P:phospholipase C-activating G protein-coupled receptor signaling pathway"/>
    <property type="evidence" value="ECO:0007669"/>
    <property type="project" value="Ensembl"/>
</dbReference>
<dbReference type="GO" id="GO:0050729">
    <property type="term" value="P:positive regulation of inflammatory response"/>
    <property type="evidence" value="ECO:0000250"/>
    <property type="project" value="UniProtKB"/>
</dbReference>
<dbReference type="GO" id="GO:0035025">
    <property type="term" value="P:positive regulation of Rho protein signal transduction"/>
    <property type="evidence" value="ECO:0007669"/>
    <property type="project" value="Ensembl"/>
</dbReference>
<dbReference type="GO" id="GO:0030155">
    <property type="term" value="P:regulation of cell adhesion"/>
    <property type="evidence" value="ECO:0000250"/>
    <property type="project" value="UniProtKB"/>
</dbReference>
<dbReference type="GO" id="GO:0043114">
    <property type="term" value="P:regulation of vascular permeability"/>
    <property type="evidence" value="ECO:0000250"/>
    <property type="project" value="UniProtKB"/>
</dbReference>
<dbReference type="GO" id="GO:0010447">
    <property type="term" value="P:response to acidic pH"/>
    <property type="evidence" value="ECO:0000250"/>
    <property type="project" value="UniProtKB"/>
</dbReference>
<dbReference type="CDD" id="cd15366">
    <property type="entry name" value="7tmA_GPR4"/>
    <property type="match status" value="1"/>
</dbReference>
<dbReference type="FunFam" id="1.20.1070.10:FF:000065">
    <property type="entry name" value="G-protein coupled receptor 4"/>
    <property type="match status" value="1"/>
</dbReference>
<dbReference type="Gene3D" id="1.20.1070.10">
    <property type="entry name" value="Rhodopsin 7-helix transmembrane proteins"/>
    <property type="match status" value="1"/>
</dbReference>
<dbReference type="InterPro" id="IPR000276">
    <property type="entry name" value="GPCR_Rhodpsn"/>
</dbReference>
<dbReference type="InterPro" id="IPR017452">
    <property type="entry name" value="GPCR_Rhodpsn_7TM"/>
</dbReference>
<dbReference type="InterPro" id="IPR002276">
    <property type="entry name" value="GPR4_orph"/>
</dbReference>
<dbReference type="PANTHER" id="PTHR24234:SF10">
    <property type="entry name" value="G-PROTEIN COUPLED RECEPTOR 4"/>
    <property type="match status" value="1"/>
</dbReference>
<dbReference type="PANTHER" id="PTHR24234">
    <property type="entry name" value="LYSOPHOSPHATIDIC ACID RECEPTOR 5/SPHINGOSYLPHOSPHORYLCHOLINE RECEPTOR"/>
    <property type="match status" value="1"/>
</dbReference>
<dbReference type="Pfam" id="PF00001">
    <property type="entry name" value="7tm_1"/>
    <property type="match status" value="1"/>
</dbReference>
<dbReference type="PRINTS" id="PR00237">
    <property type="entry name" value="GPCRRHODOPSN"/>
</dbReference>
<dbReference type="PRINTS" id="PR01147">
    <property type="entry name" value="GPR4RECEPTOR"/>
</dbReference>
<dbReference type="SUPFAM" id="SSF81321">
    <property type="entry name" value="Family A G protein-coupled receptor-like"/>
    <property type="match status" value="1"/>
</dbReference>
<dbReference type="PROSITE" id="PS00237">
    <property type="entry name" value="G_PROTEIN_RECEP_F1_1"/>
    <property type="match status" value="1"/>
</dbReference>
<dbReference type="PROSITE" id="PS50262">
    <property type="entry name" value="G_PROTEIN_RECEP_F1_2"/>
    <property type="match status" value="1"/>
</dbReference>
<protein>
    <recommendedName>
        <fullName evidence="5">G-protein coupled receptor 4</fullName>
    </recommendedName>
</protein>